<evidence type="ECO:0000255" key="1">
    <source>
        <dbReference type="HAMAP-Rule" id="MF_04018"/>
    </source>
</evidence>
<evidence type="ECO:0000256" key="2">
    <source>
        <dbReference type="SAM" id="MobiDB-lite"/>
    </source>
</evidence>
<reference key="1">
    <citation type="journal article" date="1998" name="J. Virol.">
        <title>The genome sequence of herpes simplex virus type 2.</title>
        <authorList>
            <person name="Dolan A."/>
            <person name="Jamieson F.E."/>
            <person name="Cunningham C."/>
            <person name="Barnett B.C."/>
            <person name="McGeoch D.J."/>
        </authorList>
    </citation>
    <scope>NUCLEOTIDE SEQUENCE [LARGE SCALE GENOMIC DNA]</scope>
</reference>
<protein>
    <recommendedName>
        <fullName evidence="1">Triplex capsid protein 1</fullName>
    </recommendedName>
</protein>
<sequence>MKTKPLPTAPMAWAESAVETTTSPRELAGHAPLRRVLRPPIARRDGPVLLGDRAPRRTASTMWLLGIDPAESSPGTRATRDDTEQAVDKILRGARRAGGLTVPGAPRYHLTRQVTLTDLCQPNAEPAGALLLALRHPTDLPHLARHRAPPGRQTERLAEAWGQLLEASALGSGRAESGCARAGLVSFNFLVAACAAAYDARDAAEAVRAHITTNYGGTRAGARLDRFSECLRAMVHTHVFPHEVMRFFGGLVSWVTQDELASVTAVCSGPQEATHTGHPGRPRSAVTIPACAFVDLDAELCLGGPWGAFLYLVFTYRQCRDQELCCVYVVKSQLPPRGLEAALERLFGRLRITNTIHGAEDMTPPPPNRNVDFPLAVPAASSQSPRCSASQVTNPQFVDRLYRWQPDLRGRPTARTCTYAAFAELGVMPDDSPRCLHRTERFGAVGVPVVILEGVVWRAAGWRACA</sequence>
<keyword id="KW-0167">Capsid protein</keyword>
<keyword id="KW-1048">Host nucleus</keyword>
<keyword id="KW-1185">Reference proteome</keyword>
<keyword id="KW-0946">Virion</keyword>
<accession>P89461</accession>
<dbReference type="EMBL" id="Z86099">
    <property type="protein sequence ID" value="CAB06724.1"/>
    <property type="molecule type" value="Genomic_DNA"/>
</dbReference>
<dbReference type="SMR" id="P89461"/>
<dbReference type="Proteomes" id="UP000001874">
    <property type="component" value="Segment"/>
</dbReference>
<dbReference type="GO" id="GO:0042025">
    <property type="term" value="C:host cell nucleus"/>
    <property type="evidence" value="ECO:0007669"/>
    <property type="project" value="UniProtKB-SubCell"/>
</dbReference>
<dbReference type="GO" id="GO:0019028">
    <property type="term" value="C:viral capsid"/>
    <property type="evidence" value="ECO:0007669"/>
    <property type="project" value="UniProtKB-KW"/>
</dbReference>
<dbReference type="GO" id="GO:0003677">
    <property type="term" value="F:DNA binding"/>
    <property type="evidence" value="ECO:0007669"/>
    <property type="project" value="InterPro"/>
</dbReference>
<dbReference type="GO" id="GO:0019069">
    <property type="term" value="P:viral capsid assembly"/>
    <property type="evidence" value="ECO:0007669"/>
    <property type="project" value="InterPro"/>
</dbReference>
<dbReference type="HAMAP" id="MF_04018">
    <property type="entry name" value="HSV_TRX1"/>
    <property type="match status" value="1"/>
</dbReference>
<dbReference type="InterPro" id="IPR004999">
    <property type="entry name" value="Herpes_1"/>
</dbReference>
<dbReference type="Pfam" id="PF03327">
    <property type="entry name" value="Herpes_VP19C"/>
    <property type="match status" value="1"/>
</dbReference>
<organismHost>
    <name type="scientific">Homo sapiens</name>
    <name type="common">Human</name>
    <dbReference type="NCBI Taxonomy" id="9606"/>
</organismHost>
<feature type="chain" id="PRO_0000115716" description="Triplex capsid protein 1">
    <location>
        <begin position="1"/>
        <end position="466"/>
    </location>
</feature>
<feature type="region of interest" description="Disordered" evidence="2">
    <location>
        <begin position="1"/>
        <end position="29"/>
    </location>
</feature>
<proteinExistence type="inferred from homology"/>
<organism>
    <name type="scientific">Human herpesvirus 2 (strain HG52)</name>
    <name type="common">HHV-2</name>
    <name type="synonym">Human herpes simplex virus 2</name>
    <dbReference type="NCBI Taxonomy" id="10315"/>
    <lineage>
        <taxon>Viruses</taxon>
        <taxon>Duplodnaviria</taxon>
        <taxon>Heunggongvirae</taxon>
        <taxon>Peploviricota</taxon>
        <taxon>Herviviricetes</taxon>
        <taxon>Herpesvirales</taxon>
        <taxon>Orthoherpesviridae</taxon>
        <taxon>Alphaherpesvirinae</taxon>
        <taxon>Simplexvirus</taxon>
        <taxon>Simplexvirus humanalpha2</taxon>
        <taxon>Human herpesvirus 2</taxon>
    </lineage>
</organism>
<gene>
    <name evidence="1" type="primary">TRX1</name>
    <name type="ordered locus">UL38</name>
</gene>
<name>TRX1_HHV2H</name>
<comment type="function">
    <text evidence="1">Structural component of the T=16 icosahedral capsid. The capsid is composed of pentamers and hexamers of major capsid protein/MCP, which are linked together by heterotrimers called triplexes. These triplexes are formed by a single molecule of triplex protein 1/TRX1 and two copies of triplex protein 2/TRX2. Additionally, TRX1 is required for efficient transport of TRX2 to the nucleus, which is the site of capsid assembly.</text>
</comment>
<comment type="subunit">
    <text evidence="1">Interacts with TRX2, MCP and capsid vertex component 2/CVC2.</text>
</comment>
<comment type="subcellular location">
    <subcellularLocation>
        <location evidence="1">Virion</location>
    </subcellularLocation>
    <subcellularLocation>
        <location evidence="1">Host nucleus</location>
    </subcellularLocation>
</comment>
<comment type="similarity">
    <text evidence="1">Belongs to the herpesviridae TRX1 protein family.</text>
</comment>